<feature type="chain" id="PRO_1000187273" description="Glyoxylate/hydroxypyruvate reductase A">
    <location>
        <begin position="1"/>
        <end position="312"/>
    </location>
</feature>
<feature type="active site" evidence="1">
    <location>
        <position position="227"/>
    </location>
</feature>
<feature type="active site" description="Proton donor" evidence="1">
    <location>
        <position position="275"/>
    </location>
</feature>
<protein>
    <recommendedName>
        <fullName evidence="1">Glyoxylate/hydroxypyruvate reductase A</fullName>
        <ecNumber evidence="1">1.1.1.79</ecNumber>
        <ecNumber evidence="1">1.1.1.81</ecNumber>
    </recommendedName>
    <alternativeName>
        <fullName evidence="1">2-ketoacid reductase</fullName>
    </alternativeName>
</protein>
<proteinExistence type="inferred from homology"/>
<name>GHRA_SALA4</name>
<dbReference type="EC" id="1.1.1.79" evidence="1"/>
<dbReference type="EC" id="1.1.1.81" evidence="1"/>
<dbReference type="EMBL" id="CP001138">
    <property type="protein sequence ID" value="ACH51641.1"/>
    <property type="molecule type" value="Genomic_DNA"/>
</dbReference>
<dbReference type="RefSeq" id="WP_000402551.1">
    <property type="nucleotide sequence ID" value="NC_011149.1"/>
</dbReference>
<dbReference type="SMR" id="B5F974"/>
<dbReference type="KEGG" id="sea:SeAg_B2056"/>
<dbReference type="HOGENOM" id="CLU_019796_1_0_6"/>
<dbReference type="Proteomes" id="UP000008819">
    <property type="component" value="Chromosome"/>
</dbReference>
<dbReference type="GO" id="GO:0005737">
    <property type="term" value="C:cytoplasm"/>
    <property type="evidence" value="ECO:0007669"/>
    <property type="project" value="UniProtKB-SubCell"/>
</dbReference>
<dbReference type="GO" id="GO:0030267">
    <property type="term" value="F:glyoxylate reductase (NADPH) activity"/>
    <property type="evidence" value="ECO:0007669"/>
    <property type="project" value="UniProtKB-UniRule"/>
</dbReference>
<dbReference type="GO" id="GO:0008465">
    <property type="term" value="F:hydroxypyruvate reductase (NADH) activity"/>
    <property type="evidence" value="ECO:0007669"/>
    <property type="project" value="RHEA"/>
</dbReference>
<dbReference type="GO" id="GO:0120509">
    <property type="term" value="F:hydroxypyruvate reductase (NADPH) activity"/>
    <property type="evidence" value="ECO:0007669"/>
    <property type="project" value="RHEA"/>
</dbReference>
<dbReference type="GO" id="GO:0051287">
    <property type="term" value="F:NAD binding"/>
    <property type="evidence" value="ECO:0007669"/>
    <property type="project" value="InterPro"/>
</dbReference>
<dbReference type="CDD" id="cd12164">
    <property type="entry name" value="GDH_like_2"/>
    <property type="match status" value="1"/>
</dbReference>
<dbReference type="FunFam" id="3.40.50.720:FF:000110">
    <property type="entry name" value="Glyoxylate/hydroxypyruvate reductase A"/>
    <property type="match status" value="1"/>
</dbReference>
<dbReference type="Gene3D" id="3.40.50.720">
    <property type="entry name" value="NAD(P)-binding Rossmann-like Domain"/>
    <property type="match status" value="2"/>
</dbReference>
<dbReference type="HAMAP" id="MF_01666">
    <property type="entry name" value="2_Hacid_dh_C_GhrA"/>
    <property type="match status" value="1"/>
</dbReference>
<dbReference type="InterPro" id="IPR006140">
    <property type="entry name" value="D-isomer_DH_NAD-bd"/>
</dbReference>
<dbReference type="InterPro" id="IPR023514">
    <property type="entry name" value="GhrA_Enterobacterales"/>
</dbReference>
<dbReference type="InterPro" id="IPR036291">
    <property type="entry name" value="NAD(P)-bd_dom_sf"/>
</dbReference>
<dbReference type="NCBIfam" id="NF012013">
    <property type="entry name" value="PRK15469.1"/>
    <property type="match status" value="1"/>
</dbReference>
<dbReference type="PANTHER" id="PTHR43333">
    <property type="entry name" value="2-HACID_DH_C DOMAIN-CONTAINING PROTEIN"/>
    <property type="match status" value="1"/>
</dbReference>
<dbReference type="PANTHER" id="PTHR43333:SF1">
    <property type="entry name" value="D-ISOMER SPECIFIC 2-HYDROXYACID DEHYDROGENASE NAD-BINDING DOMAIN-CONTAINING PROTEIN"/>
    <property type="match status" value="1"/>
</dbReference>
<dbReference type="Pfam" id="PF02826">
    <property type="entry name" value="2-Hacid_dh_C"/>
    <property type="match status" value="1"/>
</dbReference>
<dbReference type="SUPFAM" id="SSF51735">
    <property type="entry name" value="NAD(P)-binding Rossmann-fold domains"/>
    <property type="match status" value="1"/>
</dbReference>
<accession>B5F974</accession>
<keyword id="KW-0963">Cytoplasm</keyword>
<keyword id="KW-0520">NAD</keyword>
<keyword id="KW-0521">NADP</keyword>
<keyword id="KW-0560">Oxidoreductase</keyword>
<reference key="1">
    <citation type="journal article" date="2011" name="J. Bacteriol.">
        <title>Comparative genomics of 28 Salmonella enterica isolates: evidence for CRISPR-mediated adaptive sublineage evolution.</title>
        <authorList>
            <person name="Fricke W.F."/>
            <person name="Mammel M.K."/>
            <person name="McDermott P.F."/>
            <person name="Tartera C."/>
            <person name="White D.G."/>
            <person name="Leclerc J.E."/>
            <person name="Ravel J."/>
            <person name="Cebula T.A."/>
        </authorList>
    </citation>
    <scope>NUCLEOTIDE SEQUENCE [LARGE SCALE GENOMIC DNA]</scope>
    <source>
        <strain>SL483</strain>
    </source>
</reference>
<organism>
    <name type="scientific">Salmonella agona (strain SL483)</name>
    <dbReference type="NCBI Taxonomy" id="454166"/>
    <lineage>
        <taxon>Bacteria</taxon>
        <taxon>Pseudomonadati</taxon>
        <taxon>Pseudomonadota</taxon>
        <taxon>Gammaproteobacteria</taxon>
        <taxon>Enterobacterales</taxon>
        <taxon>Enterobacteriaceae</taxon>
        <taxon>Salmonella</taxon>
    </lineage>
</organism>
<gene>
    <name evidence="1" type="primary">ghrA</name>
    <name type="ordered locus">SeAg_B2056</name>
</gene>
<comment type="function">
    <text evidence="1">Catalyzes the NADPH-dependent reduction of glyoxylate and hydroxypyruvate into glycolate and glycerate, respectively.</text>
</comment>
<comment type="catalytic activity">
    <reaction evidence="1">
        <text>glycolate + NADP(+) = glyoxylate + NADPH + H(+)</text>
        <dbReference type="Rhea" id="RHEA:10992"/>
        <dbReference type="ChEBI" id="CHEBI:15378"/>
        <dbReference type="ChEBI" id="CHEBI:29805"/>
        <dbReference type="ChEBI" id="CHEBI:36655"/>
        <dbReference type="ChEBI" id="CHEBI:57783"/>
        <dbReference type="ChEBI" id="CHEBI:58349"/>
        <dbReference type="EC" id="1.1.1.79"/>
    </reaction>
</comment>
<comment type="catalytic activity">
    <reaction evidence="1">
        <text>(R)-glycerate + NAD(+) = 3-hydroxypyruvate + NADH + H(+)</text>
        <dbReference type="Rhea" id="RHEA:17905"/>
        <dbReference type="ChEBI" id="CHEBI:15378"/>
        <dbReference type="ChEBI" id="CHEBI:16659"/>
        <dbReference type="ChEBI" id="CHEBI:17180"/>
        <dbReference type="ChEBI" id="CHEBI:57540"/>
        <dbReference type="ChEBI" id="CHEBI:57945"/>
        <dbReference type="EC" id="1.1.1.81"/>
    </reaction>
</comment>
<comment type="catalytic activity">
    <reaction evidence="1">
        <text>(R)-glycerate + NADP(+) = 3-hydroxypyruvate + NADPH + H(+)</text>
        <dbReference type="Rhea" id="RHEA:18657"/>
        <dbReference type="ChEBI" id="CHEBI:15378"/>
        <dbReference type="ChEBI" id="CHEBI:16659"/>
        <dbReference type="ChEBI" id="CHEBI:17180"/>
        <dbReference type="ChEBI" id="CHEBI:57783"/>
        <dbReference type="ChEBI" id="CHEBI:58349"/>
        <dbReference type="EC" id="1.1.1.81"/>
    </reaction>
</comment>
<comment type="subcellular location">
    <subcellularLocation>
        <location evidence="1">Cytoplasm</location>
    </subcellularLocation>
</comment>
<comment type="similarity">
    <text evidence="1">Belongs to the D-isomer specific 2-hydroxyacid dehydrogenase family. GhrA subfamily.</text>
</comment>
<evidence type="ECO:0000255" key="1">
    <source>
        <dbReference type="HAMAP-Rule" id="MF_01666"/>
    </source>
</evidence>
<sequence length="312" mass="34987">MEIIFYHPTFNAAWWVNALEKALPHARVREWKVGDNNPADYALVWQPPVEMLAGRRLKAVFALGAGVDAILSKLNAHPEMLDASIPLFRLEDTGMGLQMQEYAVSQVLHWFRRFDDYQALKNQALWKPLPEYTREEFSVGIMGAGVLGAKVAESLQAWGFPLRCWSRSRKSWPGVESYVGREELHAFLNQTRVLINLLPNTAQTVGIINSELLDQLPDGAYVLNLARGVHVQEADLLAALDSGKLKGAMLDVFSQEPLPQESPLWRHPRVAMTPHIAAVTRPAEAIDYISRTITQLEKGEPVTGQVDRARGY</sequence>